<accession>B6JNE1</accession>
<reference key="1">
    <citation type="submission" date="2008-10" db="EMBL/GenBank/DDBJ databases">
        <title>The complete genome sequence of Helicobacter pylori strain P12.</title>
        <authorList>
            <person name="Fischer W."/>
            <person name="Windhager L."/>
            <person name="Karnholz A."/>
            <person name="Zeiller M."/>
            <person name="Zimmer R."/>
            <person name="Haas R."/>
        </authorList>
    </citation>
    <scope>NUCLEOTIDE SEQUENCE [LARGE SCALE GENOMIC DNA]</scope>
    <source>
        <strain>P12</strain>
    </source>
</reference>
<sequence>MTERKGMEEINREEFQEVVVNIGRVTKVVKGGRRFRFNALVVVGNKNGLVGFGLGKAKEVPDAIKKAVDDAFKNLIHVTIKGTTIAHDIEHKYNASRILLKPASEGTGVIAGGSTRPIVELAGIKDILTKSLGSNNPYNVVRATFDALAKIKA</sequence>
<dbReference type="EMBL" id="CP001217">
    <property type="protein sequence ID" value="ACJ08419.1"/>
    <property type="molecule type" value="Genomic_DNA"/>
</dbReference>
<dbReference type="SMR" id="B6JNE1"/>
<dbReference type="KEGG" id="hpp:HPP12_1267"/>
<dbReference type="HOGENOM" id="CLU_065898_2_2_7"/>
<dbReference type="Proteomes" id="UP000008198">
    <property type="component" value="Chromosome"/>
</dbReference>
<dbReference type="GO" id="GO:0015935">
    <property type="term" value="C:small ribosomal subunit"/>
    <property type="evidence" value="ECO:0007669"/>
    <property type="project" value="InterPro"/>
</dbReference>
<dbReference type="GO" id="GO:0019843">
    <property type="term" value="F:rRNA binding"/>
    <property type="evidence" value="ECO:0007669"/>
    <property type="project" value="UniProtKB-UniRule"/>
</dbReference>
<dbReference type="GO" id="GO:0003735">
    <property type="term" value="F:structural constituent of ribosome"/>
    <property type="evidence" value="ECO:0007669"/>
    <property type="project" value="InterPro"/>
</dbReference>
<dbReference type="GO" id="GO:0006412">
    <property type="term" value="P:translation"/>
    <property type="evidence" value="ECO:0007669"/>
    <property type="project" value="UniProtKB-UniRule"/>
</dbReference>
<dbReference type="FunFam" id="3.30.160.20:FF:000001">
    <property type="entry name" value="30S ribosomal protein S5"/>
    <property type="match status" value="1"/>
</dbReference>
<dbReference type="FunFam" id="3.30.230.10:FF:000024">
    <property type="entry name" value="30S ribosomal protein S5"/>
    <property type="match status" value="1"/>
</dbReference>
<dbReference type="Gene3D" id="3.30.160.20">
    <property type="match status" value="1"/>
</dbReference>
<dbReference type="Gene3D" id="3.30.230.10">
    <property type="match status" value="1"/>
</dbReference>
<dbReference type="HAMAP" id="MF_01307_B">
    <property type="entry name" value="Ribosomal_uS5_B"/>
    <property type="match status" value="1"/>
</dbReference>
<dbReference type="InterPro" id="IPR020568">
    <property type="entry name" value="Ribosomal_Su5_D2-typ_SF"/>
</dbReference>
<dbReference type="InterPro" id="IPR000851">
    <property type="entry name" value="Ribosomal_uS5"/>
</dbReference>
<dbReference type="InterPro" id="IPR005712">
    <property type="entry name" value="Ribosomal_uS5_bac-type"/>
</dbReference>
<dbReference type="InterPro" id="IPR005324">
    <property type="entry name" value="Ribosomal_uS5_C"/>
</dbReference>
<dbReference type="InterPro" id="IPR013810">
    <property type="entry name" value="Ribosomal_uS5_N"/>
</dbReference>
<dbReference type="InterPro" id="IPR018192">
    <property type="entry name" value="Ribosomal_uS5_N_CS"/>
</dbReference>
<dbReference type="InterPro" id="IPR014721">
    <property type="entry name" value="Ribsml_uS5_D2-typ_fold_subgr"/>
</dbReference>
<dbReference type="NCBIfam" id="TIGR01021">
    <property type="entry name" value="rpsE_bact"/>
    <property type="match status" value="1"/>
</dbReference>
<dbReference type="PANTHER" id="PTHR48277">
    <property type="entry name" value="MITOCHONDRIAL RIBOSOMAL PROTEIN S5"/>
    <property type="match status" value="1"/>
</dbReference>
<dbReference type="PANTHER" id="PTHR48277:SF1">
    <property type="entry name" value="MITOCHONDRIAL RIBOSOMAL PROTEIN S5"/>
    <property type="match status" value="1"/>
</dbReference>
<dbReference type="Pfam" id="PF00333">
    <property type="entry name" value="Ribosomal_S5"/>
    <property type="match status" value="1"/>
</dbReference>
<dbReference type="Pfam" id="PF03719">
    <property type="entry name" value="Ribosomal_S5_C"/>
    <property type="match status" value="1"/>
</dbReference>
<dbReference type="SUPFAM" id="SSF54768">
    <property type="entry name" value="dsRNA-binding domain-like"/>
    <property type="match status" value="1"/>
</dbReference>
<dbReference type="SUPFAM" id="SSF54211">
    <property type="entry name" value="Ribosomal protein S5 domain 2-like"/>
    <property type="match status" value="1"/>
</dbReference>
<dbReference type="PROSITE" id="PS00585">
    <property type="entry name" value="RIBOSOMAL_S5"/>
    <property type="match status" value="1"/>
</dbReference>
<dbReference type="PROSITE" id="PS50881">
    <property type="entry name" value="S5_DSRBD"/>
    <property type="match status" value="1"/>
</dbReference>
<keyword id="KW-0687">Ribonucleoprotein</keyword>
<keyword id="KW-0689">Ribosomal protein</keyword>
<keyword id="KW-0694">RNA-binding</keyword>
<keyword id="KW-0699">rRNA-binding</keyword>
<name>RS5_HELP2</name>
<evidence type="ECO:0000255" key="1">
    <source>
        <dbReference type="HAMAP-Rule" id="MF_01307"/>
    </source>
</evidence>
<evidence type="ECO:0000305" key="2"/>
<protein>
    <recommendedName>
        <fullName evidence="1">Small ribosomal subunit protein uS5</fullName>
    </recommendedName>
    <alternativeName>
        <fullName evidence="2">30S ribosomal protein S5</fullName>
    </alternativeName>
</protein>
<gene>
    <name evidence="1" type="primary">rpsE</name>
    <name type="ordered locus">HPP12_1267</name>
</gene>
<comment type="function">
    <text evidence="1">With S4 and S12 plays an important role in translational accuracy.</text>
</comment>
<comment type="function">
    <text evidence="1">Located at the back of the 30S subunit body where it stabilizes the conformation of the head with respect to the body.</text>
</comment>
<comment type="subunit">
    <text evidence="1">Part of the 30S ribosomal subunit. Contacts proteins S4 and S8.</text>
</comment>
<comment type="domain">
    <text>The N-terminal domain interacts with the head of the 30S subunit; the C-terminal domain interacts with the body and contacts protein S4. The interaction surface between S4 and S5 is involved in control of translational fidelity.</text>
</comment>
<comment type="similarity">
    <text evidence="1">Belongs to the universal ribosomal protein uS5 family.</text>
</comment>
<proteinExistence type="inferred from homology"/>
<feature type="chain" id="PRO_1000140861" description="Small ribosomal subunit protein uS5">
    <location>
        <begin position="1"/>
        <end position="153"/>
    </location>
</feature>
<feature type="domain" description="S5 DRBM" evidence="1">
    <location>
        <begin position="15"/>
        <end position="78"/>
    </location>
</feature>
<organism>
    <name type="scientific">Helicobacter pylori (strain P12)</name>
    <dbReference type="NCBI Taxonomy" id="570508"/>
    <lineage>
        <taxon>Bacteria</taxon>
        <taxon>Pseudomonadati</taxon>
        <taxon>Campylobacterota</taxon>
        <taxon>Epsilonproteobacteria</taxon>
        <taxon>Campylobacterales</taxon>
        <taxon>Helicobacteraceae</taxon>
        <taxon>Helicobacter</taxon>
    </lineage>
</organism>